<proteinExistence type="inferred from homology"/>
<keyword id="KW-0067">ATP-binding</keyword>
<keyword id="KW-0285">Flavoprotein</keyword>
<keyword id="KW-0288">FMN</keyword>
<keyword id="KW-0418">Kinase</keyword>
<keyword id="KW-0460">Magnesium</keyword>
<keyword id="KW-0479">Metal-binding</keyword>
<keyword id="KW-0547">Nucleotide-binding</keyword>
<keyword id="KW-1185">Reference proteome</keyword>
<keyword id="KW-0808">Transferase</keyword>
<keyword id="KW-0862">Zinc</keyword>
<name>RIFK_NEOFI</name>
<accession>A1DG00</accession>
<comment type="function">
    <text evidence="1">Catalyzes the phosphorylation of riboflavin (vitamin B2) to form flavin mononucleotide (FMN) coenzyme.</text>
</comment>
<comment type="catalytic activity">
    <reaction>
        <text>riboflavin + ATP = FMN + ADP + H(+)</text>
        <dbReference type="Rhea" id="RHEA:14357"/>
        <dbReference type="ChEBI" id="CHEBI:15378"/>
        <dbReference type="ChEBI" id="CHEBI:30616"/>
        <dbReference type="ChEBI" id="CHEBI:57986"/>
        <dbReference type="ChEBI" id="CHEBI:58210"/>
        <dbReference type="ChEBI" id="CHEBI:456216"/>
        <dbReference type="EC" id="2.7.1.26"/>
    </reaction>
</comment>
<comment type="cofactor">
    <cofactor evidence="1">
        <name>Zn(2+)</name>
        <dbReference type="ChEBI" id="CHEBI:29105"/>
    </cofactor>
    <cofactor evidence="1">
        <name>Mg(2+)</name>
        <dbReference type="ChEBI" id="CHEBI:18420"/>
    </cofactor>
    <text evidence="1">Zinc or magnesium.</text>
</comment>
<comment type="pathway">
    <text>Cofactor biosynthesis; FMN biosynthesis; FMN from riboflavin (ATP route): step 1/1.</text>
</comment>
<comment type="similarity">
    <text evidence="4">Belongs to the flavokinase family.</text>
</comment>
<evidence type="ECO:0000250" key="1"/>
<evidence type="ECO:0000250" key="2">
    <source>
        <dbReference type="UniProtKB" id="Q969G6"/>
    </source>
</evidence>
<evidence type="ECO:0000256" key="3">
    <source>
        <dbReference type="SAM" id="MobiDB-lite"/>
    </source>
</evidence>
<evidence type="ECO:0000305" key="4"/>
<feature type="chain" id="PRO_0000301845" description="Riboflavin kinase">
    <location>
        <begin position="1"/>
        <end position="218"/>
    </location>
</feature>
<feature type="region of interest" description="Disordered" evidence="3">
    <location>
        <begin position="1"/>
        <end position="27"/>
    </location>
</feature>
<feature type="active site" description="Nucleophile" evidence="1">
    <location>
        <position position="120"/>
    </location>
</feature>
<feature type="binding site" evidence="2">
    <location>
        <position position="44"/>
    </location>
    <ligand>
        <name>Mg(2+)</name>
        <dbReference type="ChEBI" id="CHEBI:18420"/>
    </ligand>
</feature>
<feature type="binding site" evidence="2">
    <location>
        <position position="46"/>
    </location>
    <ligand>
        <name>Mg(2+)</name>
        <dbReference type="ChEBI" id="CHEBI:18420"/>
    </ligand>
</feature>
<reference key="1">
    <citation type="journal article" date="2008" name="PLoS Genet.">
        <title>Genomic islands in the pathogenic filamentous fungus Aspergillus fumigatus.</title>
        <authorList>
            <person name="Fedorova N.D."/>
            <person name="Khaldi N."/>
            <person name="Joardar V.S."/>
            <person name="Maiti R."/>
            <person name="Amedeo P."/>
            <person name="Anderson M.J."/>
            <person name="Crabtree J."/>
            <person name="Silva J.C."/>
            <person name="Badger J.H."/>
            <person name="Albarraq A."/>
            <person name="Angiuoli S."/>
            <person name="Bussey H."/>
            <person name="Bowyer P."/>
            <person name="Cotty P.J."/>
            <person name="Dyer P.S."/>
            <person name="Egan A."/>
            <person name="Galens K."/>
            <person name="Fraser-Liggett C.M."/>
            <person name="Haas B.J."/>
            <person name="Inman J.M."/>
            <person name="Kent R."/>
            <person name="Lemieux S."/>
            <person name="Malavazi I."/>
            <person name="Orvis J."/>
            <person name="Roemer T."/>
            <person name="Ronning C.M."/>
            <person name="Sundaram J.P."/>
            <person name="Sutton G."/>
            <person name="Turner G."/>
            <person name="Venter J.C."/>
            <person name="White O.R."/>
            <person name="Whitty B.R."/>
            <person name="Youngman P."/>
            <person name="Wolfe K.H."/>
            <person name="Goldman G.H."/>
            <person name="Wortman J.R."/>
            <person name="Jiang B."/>
            <person name="Denning D.W."/>
            <person name="Nierman W.C."/>
        </authorList>
    </citation>
    <scope>NUCLEOTIDE SEQUENCE [LARGE SCALE GENOMIC DNA]</scope>
    <source>
        <strain>ATCC 1020 / DSM 3700 / CBS 544.65 / FGSC A1164 / JCM 1740 / NRRL 181 / WB 181</strain>
    </source>
</reference>
<dbReference type="EC" id="2.7.1.26"/>
<dbReference type="EMBL" id="DS027696">
    <property type="protein sequence ID" value="EAW18307.1"/>
    <property type="molecule type" value="Genomic_DNA"/>
</dbReference>
<dbReference type="RefSeq" id="XP_001260204.1">
    <property type="nucleotide sequence ID" value="XM_001260203.1"/>
</dbReference>
<dbReference type="SMR" id="A1DG00"/>
<dbReference type="STRING" id="331117.A1DG00"/>
<dbReference type="EnsemblFungi" id="EAW18307">
    <property type="protein sequence ID" value="EAW18307"/>
    <property type="gene ID" value="NFIA_082540"/>
</dbReference>
<dbReference type="GeneID" id="4586761"/>
<dbReference type="KEGG" id="nfi:NFIA_082540"/>
<dbReference type="VEuPathDB" id="FungiDB:NFIA_082540"/>
<dbReference type="eggNOG" id="KOG3110">
    <property type="taxonomic scope" value="Eukaryota"/>
</dbReference>
<dbReference type="HOGENOM" id="CLU_048437_3_2_1"/>
<dbReference type="OMA" id="FDCEVAR"/>
<dbReference type="OrthoDB" id="276388at2759"/>
<dbReference type="UniPathway" id="UPA00276">
    <property type="reaction ID" value="UER00406"/>
</dbReference>
<dbReference type="Proteomes" id="UP000006702">
    <property type="component" value="Unassembled WGS sequence"/>
</dbReference>
<dbReference type="GO" id="GO:0005739">
    <property type="term" value="C:mitochondrion"/>
    <property type="evidence" value="ECO:0007669"/>
    <property type="project" value="TreeGrafter"/>
</dbReference>
<dbReference type="GO" id="GO:0005524">
    <property type="term" value="F:ATP binding"/>
    <property type="evidence" value="ECO:0007669"/>
    <property type="project" value="UniProtKB-KW"/>
</dbReference>
<dbReference type="GO" id="GO:0046872">
    <property type="term" value="F:metal ion binding"/>
    <property type="evidence" value="ECO:0007669"/>
    <property type="project" value="UniProtKB-KW"/>
</dbReference>
<dbReference type="GO" id="GO:0008531">
    <property type="term" value="F:riboflavin kinase activity"/>
    <property type="evidence" value="ECO:0007669"/>
    <property type="project" value="UniProtKB-EC"/>
</dbReference>
<dbReference type="GO" id="GO:0009398">
    <property type="term" value="P:FMN biosynthetic process"/>
    <property type="evidence" value="ECO:0007669"/>
    <property type="project" value="UniProtKB-UniPathway"/>
</dbReference>
<dbReference type="GO" id="GO:0009231">
    <property type="term" value="P:riboflavin biosynthetic process"/>
    <property type="evidence" value="ECO:0007669"/>
    <property type="project" value="InterPro"/>
</dbReference>
<dbReference type="FunFam" id="2.40.30.30:FF:000008">
    <property type="entry name" value="Riboflavin kinase"/>
    <property type="match status" value="1"/>
</dbReference>
<dbReference type="Gene3D" id="2.40.30.30">
    <property type="entry name" value="Riboflavin kinase-like"/>
    <property type="match status" value="1"/>
</dbReference>
<dbReference type="InterPro" id="IPR023468">
    <property type="entry name" value="Riboflavin_kinase"/>
</dbReference>
<dbReference type="InterPro" id="IPR015865">
    <property type="entry name" value="Riboflavin_kinase_bac/euk"/>
</dbReference>
<dbReference type="InterPro" id="IPR023465">
    <property type="entry name" value="Riboflavin_kinase_dom_sf"/>
</dbReference>
<dbReference type="PANTHER" id="PTHR22749:SF6">
    <property type="entry name" value="RIBOFLAVIN KINASE"/>
    <property type="match status" value="1"/>
</dbReference>
<dbReference type="PANTHER" id="PTHR22749">
    <property type="entry name" value="RIBOFLAVIN KINASE/FMN ADENYLYLTRANSFERASE"/>
    <property type="match status" value="1"/>
</dbReference>
<dbReference type="Pfam" id="PF01687">
    <property type="entry name" value="Flavokinase"/>
    <property type="match status" value="1"/>
</dbReference>
<dbReference type="SMART" id="SM00904">
    <property type="entry name" value="Flavokinase"/>
    <property type="match status" value="1"/>
</dbReference>
<dbReference type="SUPFAM" id="SSF82114">
    <property type="entry name" value="Riboflavin kinase-like"/>
    <property type="match status" value="1"/>
</dbReference>
<sequence length="218" mass="23563">MRPDGPRDPVAGPDSGPEPPYPVRLSGPVIKGFGRGSKELGIPTANIPAEGLAEYPDLQVGVYYGVVALDPAKFQYQEDQGEGSTSSTGGAGAGAGAAILPAVLSIGYNPFYKNKTKSIEIHIMPPLSSPSPTAEGAGEVKFHKLPDFYGTQLKLLILGYIRPEYDYVSLEALIEDIRVDCEVARKSLQRPAYACYIDGDEKECSDAVREQRRWLVNF</sequence>
<protein>
    <recommendedName>
        <fullName>Riboflavin kinase</fullName>
        <ecNumber>2.7.1.26</ecNumber>
    </recommendedName>
    <alternativeName>
        <fullName>Flavin mononucleotide kinase 1</fullName>
    </alternativeName>
</protein>
<organism>
    <name type="scientific">Neosartorya fischeri (strain ATCC 1020 / DSM 3700 / CBS 544.65 / FGSC A1164 / JCM 1740 / NRRL 181 / WB 181)</name>
    <name type="common">Aspergillus fischerianus</name>
    <dbReference type="NCBI Taxonomy" id="331117"/>
    <lineage>
        <taxon>Eukaryota</taxon>
        <taxon>Fungi</taxon>
        <taxon>Dikarya</taxon>
        <taxon>Ascomycota</taxon>
        <taxon>Pezizomycotina</taxon>
        <taxon>Eurotiomycetes</taxon>
        <taxon>Eurotiomycetidae</taxon>
        <taxon>Eurotiales</taxon>
        <taxon>Aspergillaceae</taxon>
        <taxon>Aspergillus</taxon>
        <taxon>Aspergillus subgen. Fumigati</taxon>
    </lineage>
</organism>
<gene>
    <name type="primary">fmn1</name>
    <name type="ORF">NFIA_082540</name>
</gene>